<accession>Q80VH0</accession>
<accession>E9QMV3</accession>
<accession>Q3U178</accession>
<accession>Q8BRV6</accession>
<accession>Q8BRY8</accession>
<dbReference type="EMBL" id="AY178734">
    <property type="protein sequence ID" value="AAO13613.1"/>
    <property type="status" value="ALT_INIT"/>
    <property type="molecule type" value="mRNA"/>
</dbReference>
<dbReference type="EMBL" id="AK041039">
    <property type="protein sequence ID" value="BAC30794.1"/>
    <property type="molecule type" value="mRNA"/>
</dbReference>
<dbReference type="EMBL" id="AK041242">
    <property type="protein sequence ID" value="BAC30875.1"/>
    <property type="molecule type" value="mRNA"/>
</dbReference>
<dbReference type="EMBL" id="AK156201">
    <property type="protein sequence ID" value="BAE33622.1"/>
    <property type="status" value="ALT_SEQ"/>
    <property type="molecule type" value="mRNA"/>
</dbReference>
<dbReference type="EMBL" id="AC101978">
    <property type="status" value="NOT_ANNOTATED_CDS"/>
    <property type="molecule type" value="Genomic_DNA"/>
</dbReference>
<dbReference type="EMBL" id="AC161171">
    <property type="status" value="NOT_ANNOTATED_CDS"/>
    <property type="molecule type" value="Genomic_DNA"/>
</dbReference>
<dbReference type="EMBL" id="AC166331">
    <property type="status" value="NOT_ANNOTATED_CDS"/>
    <property type="molecule type" value="Genomic_DNA"/>
</dbReference>
<dbReference type="CCDS" id="CCDS38645.1"/>
<dbReference type="RefSeq" id="NP_001028522.2">
    <property type="nucleotide sequence ID" value="NM_001033350.3"/>
</dbReference>
<dbReference type="SMR" id="Q80VH0"/>
<dbReference type="BioGRID" id="232385">
    <property type="interactions" value="4"/>
</dbReference>
<dbReference type="FunCoup" id="Q80VH0">
    <property type="interactions" value="391"/>
</dbReference>
<dbReference type="IntAct" id="Q80VH0">
    <property type="interactions" value="2"/>
</dbReference>
<dbReference type="STRING" id="10090.ENSMUSP00000035484"/>
<dbReference type="GlyGen" id="Q80VH0">
    <property type="glycosylation" value="1 site"/>
</dbReference>
<dbReference type="iPTMnet" id="Q80VH0"/>
<dbReference type="PhosphoSitePlus" id="Q80VH0"/>
<dbReference type="PaxDb" id="10090-ENSMUSP00000035484"/>
<dbReference type="ProteomicsDB" id="273536"/>
<dbReference type="Antibodypedia" id="51626">
    <property type="antibodies" value="114 antibodies from 26 providers"/>
</dbReference>
<dbReference type="Ensembl" id="ENSMUST00000041577.13">
    <property type="protein sequence ID" value="ENSMUSP00000035484.9"/>
    <property type="gene ID" value="ENSMUSG00000037922.14"/>
</dbReference>
<dbReference type="GeneID" id="242248"/>
<dbReference type="KEGG" id="mmu:242248"/>
<dbReference type="UCSC" id="uc008rmd.1">
    <property type="organism name" value="mouse"/>
</dbReference>
<dbReference type="AGR" id="MGI:2442120"/>
<dbReference type="CTD" id="55024"/>
<dbReference type="MGI" id="MGI:2442120">
    <property type="gene designation" value="Bank1"/>
</dbReference>
<dbReference type="VEuPathDB" id="HostDB:ENSMUSG00000037922"/>
<dbReference type="eggNOG" id="ENOG502REIM">
    <property type="taxonomic scope" value="Eukaryota"/>
</dbReference>
<dbReference type="GeneTree" id="ENSGT00390000008787"/>
<dbReference type="HOGENOM" id="CLU_012993_1_0_1"/>
<dbReference type="InParanoid" id="Q80VH0"/>
<dbReference type="OMA" id="MCQALQA"/>
<dbReference type="OrthoDB" id="8192811at2759"/>
<dbReference type="PhylomeDB" id="Q80VH0"/>
<dbReference type="TreeFam" id="TF328570"/>
<dbReference type="BioGRID-ORCS" id="242248">
    <property type="hits" value="2 hits in 76 CRISPR screens"/>
</dbReference>
<dbReference type="ChiTaRS" id="Bank1">
    <property type="organism name" value="mouse"/>
</dbReference>
<dbReference type="PRO" id="PR:Q80VH0"/>
<dbReference type="Proteomes" id="UP000000589">
    <property type="component" value="Chromosome 3"/>
</dbReference>
<dbReference type="RNAct" id="Q80VH0">
    <property type="molecule type" value="protein"/>
</dbReference>
<dbReference type="Bgee" id="ENSMUSG00000037922">
    <property type="expression patterns" value="Expressed in peripheral lymph node and 86 other cell types or tissues"/>
</dbReference>
<dbReference type="ExpressionAtlas" id="Q80VH0">
    <property type="expression patterns" value="baseline and differential"/>
</dbReference>
<dbReference type="GO" id="GO:0048471">
    <property type="term" value="C:perinuclear region of cytoplasm"/>
    <property type="evidence" value="ECO:0007669"/>
    <property type="project" value="Ensembl"/>
</dbReference>
<dbReference type="GO" id="GO:0043274">
    <property type="term" value="F:phospholipase binding"/>
    <property type="evidence" value="ECO:0007669"/>
    <property type="project" value="Ensembl"/>
</dbReference>
<dbReference type="GO" id="GO:0002020">
    <property type="term" value="F:protease binding"/>
    <property type="evidence" value="ECO:0007669"/>
    <property type="project" value="Ensembl"/>
</dbReference>
<dbReference type="GO" id="GO:1990782">
    <property type="term" value="F:protein tyrosine kinase binding"/>
    <property type="evidence" value="ECO:0007669"/>
    <property type="project" value="Ensembl"/>
</dbReference>
<dbReference type="GO" id="GO:0035591">
    <property type="term" value="F:signaling adaptor activity"/>
    <property type="evidence" value="ECO:0007669"/>
    <property type="project" value="Ensembl"/>
</dbReference>
<dbReference type="GO" id="GO:0005102">
    <property type="term" value="F:signaling receptor binding"/>
    <property type="evidence" value="ECO:0007669"/>
    <property type="project" value="Ensembl"/>
</dbReference>
<dbReference type="GO" id="GO:0042113">
    <property type="term" value="P:B cell activation"/>
    <property type="evidence" value="ECO:0007669"/>
    <property type="project" value="UniProtKB-KW"/>
</dbReference>
<dbReference type="GO" id="GO:0000165">
    <property type="term" value="P:MAPK cascade"/>
    <property type="evidence" value="ECO:0000315"/>
    <property type="project" value="MGI"/>
</dbReference>
<dbReference type="GO" id="GO:0050869">
    <property type="term" value="P:negative regulation of B cell activation"/>
    <property type="evidence" value="ECO:0000316"/>
    <property type="project" value="MGI"/>
</dbReference>
<dbReference type="GO" id="GO:0032715">
    <property type="term" value="P:negative regulation of interleukin-6 production"/>
    <property type="evidence" value="ECO:0000315"/>
    <property type="project" value="MGI"/>
</dbReference>
<dbReference type="GO" id="GO:0051898">
    <property type="term" value="P:negative regulation of phosphatidylinositol 3-kinase/protein kinase B signal transduction"/>
    <property type="evidence" value="ECO:0000316"/>
    <property type="project" value="MGI"/>
</dbReference>
<dbReference type="GO" id="GO:0045947">
    <property type="term" value="P:negative regulation of translational initiation"/>
    <property type="evidence" value="ECO:0000315"/>
    <property type="project" value="MGI"/>
</dbReference>
<dbReference type="GO" id="GO:0043491">
    <property type="term" value="P:phosphatidylinositol 3-kinase/protein kinase B signal transduction"/>
    <property type="evidence" value="ECO:0000316"/>
    <property type="project" value="MGI"/>
</dbReference>
<dbReference type="GO" id="GO:0043410">
    <property type="term" value="P:positive regulation of MAPK cascade"/>
    <property type="evidence" value="ECO:0000315"/>
    <property type="project" value="MGI"/>
</dbReference>
<dbReference type="GO" id="GO:0009617">
    <property type="term" value="P:response to bacterium"/>
    <property type="evidence" value="ECO:0000270"/>
    <property type="project" value="MGI"/>
</dbReference>
<dbReference type="FunFam" id="3.40.50.10140:FF:000017">
    <property type="entry name" value="B cell scaffold protein with ankyrin repeats 1"/>
    <property type="match status" value="1"/>
</dbReference>
<dbReference type="Gene3D" id="3.40.50.10140">
    <property type="entry name" value="Toll/interleukin-1 receptor homology (TIR) domain"/>
    <property type="match status" value="1"/>
</dbReference>
<dbReference type="InterPro" id="IPR052446">
    <property type="entry name" value="B-cell_PI3K-Signaling_Adptrs"/>
</dbReference>
<dbReference type="InterPro" id="IPR017893">
    <property type="entry name" value="DBB_domain"/>
</dbReference>
<dbReference type="InterPro" id="IPR041340">
    <property type="entry name" value="PIK3AP1_TIR"/>
</dbReference>
<dbReference type="InterPro" id="IPR000157">
    <property type="entry name" value="TIR_dom"/>
</dbReference>
<dbReference type="InterPro" id="IPR035897">
    <property type="entry name" value="Toll_tir_struct_dom_sf"/>
</dbReference>
<dbReference type="PANTHER" id="PTHR16267:SF13">
    <property type="entry name" value="B-CELL SCAFFOLD PROTEIN WITH ANKYRIN REPEATS"/>
    <property type="match status" value="1"/>
</dbReference>
<dbReference type="PANTHER" id="PTHR16267">
    <property type="entry name" value="BANK1/PIK3AP1 FAMILY MEMBER"/>
    <property type="match status" value="1"/>
</dbReference>
<dbReference type="Pfam" id="PF14545">
    <property type="entry name" value="DBB"/>
    <property type="match status" value="1"/>
</dbReference>
<dbReference type="Pfam" id="PF18567">
    <property type="entry name" value="TIR_3"/>
    <property type="match status" value="1"/>
</dbReference>
<dbReference type="SMART" id="SM01282">
    <property type="entry name" value="DBB"/>
    <property type="match status" value="1"/>
</dbReference>
<dbReference type="PROSITE" id="PS50297">
    <property type="entry name" value="ANK_REP_REGION"/>
    <property type="match status" value="1"/>
</dbReference>
<dbReference type="PROSITE" id="PS51376">
    <property type="entry name" value="DBB"/>
    <property type="match status" value="1"/>
</dbReference>
<dbReference type="PROSITE" id="PS50104">
    <property type="entry name" value="TIR"/>
    <property type="match status" value="1"/>
</dbReference>
<protein>
    <recommendedName>
        <fullName>B-cell scaffold protein with ankyrin repeats</fullName>
    </recommendedName>
    <alternativeName>
        <fullName>Protein AVIEF</fullName>
    </alternativeName>
</protein>
<evidence type="ECO:0000250" key="1"/>
<evidence type="ECO:0000255" key="2">
    <source>
        <dbReference type="PROSITE-ProRule" id="PRU00204"/>
    </source>
</evidence>
<evidence type="ECO:0000255" key="3">
    <source>
        <dbReference type="PROSITE-ProRule" id="PRU00707"/>
    </source>
</evidence>
<evidence type="ECO:0000256" key="4">
    <source>
        <dbReference type="SAM" id="MobiDB-lite"/>
    </source>
</evidence>
<evidence type="ECO:0000269" key="5">
    <source>
    </source>
</evidence>
<evidence type="ECO:0000305" key="6"/>
<evidence type="ECO:0007744" key="7">
    <source>
    </source>
</evidence>
<keyword id="KW-0040">ANK repeat</keyword>
<keyword id="KW-0075">B-cell activation</keyword>
<keyword id="KW-0597">Phosphoprotein</keyword>
<keyword id="KW-1185">Reference proteome</keyword>
<keyword id="KW-0677">Repeat</keyword>
<sequence length="783" mass="89406">MLPVASGTRGSTQDLFQVGLAPPGNAKDILLLYEEDAEEWALYLREIFMRVVEREAILLYPLHSFSSSHLEMLNFYAYKCKLLIISNSLLKDLTPKKCQFLEKILHSTGNVVTLLCGMESSDPFYQLLSIPRKRWEISTEQDPDGYISVIRQILDQGPEDYLEVSIPTDSRAKYPEDTSGQKGTDVLASLRPSVPRVLVLPGEIPCEKPGEIFILLKDELIGEILEVEFISTNKRLRARPARWNKSVWHMKAADFPAGSVTVNIHCDGIIKATTEIKYCSAAKATESPFRVSDPGKSLCQKSIEELDNVLASIFKREIPYYEFKHLQAETYPQKERTHTTELPTLLHCAAKFGLKNLALHLLQCSGATRAARMKATDGSDLLHIAERHGHEELKEVFEDFLSQNTGRNSKQENDYEEDVISFSTYSPSMPSPASLHELRKTHRRNTDRSEEPERSVEMKEEEAGAEARRSLSEGERESSENQYDDLYVFIPGFDTEGNSEEPLPHCRPPLLPPRPGTAASQLERPHFTSQGKVLEDQMERSQNWNDLNARPETREESSREEKKEEAQEEEEEEENPYAFAETEDNEYDLILASKSVKKRTGNRSFIINRPPAPTPRPTHIPPKEETTPYIAQVFQQKAARRQSDGDKFYSLPKKPDKTRMEGPTFPSTRDYLTTGQEELILLQERVKNGKMSVDEALEKFKHWQMGKSGLEMIQQEKLRQLRDNIIGKRPEDENAYDKLTIVHHPSGNTAHNENMLYNSPFNSKFPARIQVEKEFGFCCKKDH</sequence>
<comment type="function">
    <text evidence="1">Involved in B-cell receptor (BCR)-induced Ca(2+) mobilization from intracellular stores. Promotes Lyn-mediated phosphorylation of IP3 receptors 1 and 2 (By similarity).</text>
</comment>
<comment type="subunit">
    <text evidence="1">Interacts with LYN, ITPR1 and ITPR2.</text>
</comment>
<comment type="interaction">
    <interactant intactId="EBI-646949">
        <id>Q80VH0</id>
    </interactant>
    <interactant intactId="EBI-602878">
        <id>P42227</id>
        <label>Stat3</label>
    </interactant>
    <organismsDiffer>false</organismsDiffer>
    <experiments>4</experiments>
</comment>
<comment type="tissue specificity">
    <text evidence="5">Specifically expressed in spleen. Highly expressed in immature B-cells and recirculating B-cells, and at low levels in pro-B and pre-B cells.</text>
</comment>
<comment type="PTM">
    <text evidence="1">Phosphorylated on tyrosines upon BCR activation.</text>
</comment>
<comment type="sequence caution" evidence="6">
    <conflict type="erroneous initiation">
        <sequence resource="EMBL-CDS" id="AAO13613"/>
    </conflict>
</comment>
<comment type="sequence caution" evidence="6">
    <conflict type="erroneous termination">
        <sequence resource="EMBL-CDS" id="BAE33622"/>
    </conflict>
    <text>Truncated C-terminus.</text>
</comment>
<comment type="sequence caution" evidence="6">
    <conflict type="frameshift">
        <sequence resource="EMBL-CDS" id="BAE33622"/>
    </conflict>
</comment>
<name>BANK1_MOUSE</name>
<organism>
    <name type="scientific">Mus musculus</name>
    <name type="common">Mouse</name>
    <dbReference type="NCBI Taxonomy" id="10090"/>
    <lineage>
        <taxon>Eukaryota</taxon>
        <taxon>Metazoa</taxon>
        <taxon>Chordata</taxon>
        <taxon>Craniata</taxon>
        <taxon>Vertebrata</taxon>
        <taxon>Euteleostomi</taxon>
        <taxon>Mammalia</taxon>
        <taxon>Eutheria</taxon>
        <taxon>Euarchontoglires</taxon>
        <taxon>Glires</taxon>
        <taxon>Rodentia</taxon>
        <taxon>Myomorpha</taxon>
        <taxon>Muroidea</taxon>
        <taxon>Muridae</taxon>
        <taxon>Murinae</taxon>
        <taxon>Mus</taxon>
        <taxon>Mus</taxon>
    </lineage>
</organism>
<proteinExistence type="evidence at protein level"/>
<feature type="chain" id="PRO_0000251928" description="B-cell scaffold protein with ankyrin repeats">
    <location>
        <begin position="1"/>
        <end position="783"/>
    </location>
</feature>
<feature type="domain" description="TIR" evidence="2">
    <location>
        <begin position="25"/>
        <end position="153"/>
    </location>
</feature>
<feature type="domain" description="DBB" evidence="3">
    <location>
        <begin position="199"/>
        <end position="326"/>
    </location>
</feature>
<feature type="repeat" description="ANK 1">
    <location>
        <begin position="341"/>
        <end position="370"/>
    </location>
</feature>
<feature type="repeat" description="ANK 2">
    <location>
        <begin position="377"/>
        <end position="407"/>
    </location>
</feature>
<feature type="region of interest" description="Interaction with ITPR2" evidence="1">
    <location>
        <begin position="1"/>
        <end position="154"/>
    </location>
</feature>
<feature type="region of interest" description="Disordered" evidence="4">
    <location>
        <begin position="422"/>
        <end position="521"/>
    </location>
</feature>
<feature type="region of interest" description="Disordered" evidence="4">
    <location>
        <begin position="538"/>
        <end position="586"/>
    </location>
</feature>
<feature type="region of interest" description="Disordered" evidence="4">
    <location>
        <begin position="604"/>
        <end position="624"/>
    </location>
</feature>
<feature type="region of interest" description="Disordered" evidence="4">
    <location>
        <begin position="641"/>
        <end position="670"/>
    </location>
</feature>
<feature type="compositionally biased region" description="Basic and acidic residues" evidence="4">
    <location>
        <begin position="444"/>
        <end position="479"/>
    </location>
</feature>
<feature type="compositionally biased region" description="Pro residues" evidence="4">
    <location>
        <begin position="505"/>
        <end position="515"/>
    </location>
</feature>
<feature type="compositionally biased region" description="Basic and acidic residues" evidence="4">
    <location>
        <begin position="549"/>
        <end position="565"/>
    </location>
</feature>
<feature type="compositionally biased region" description="Acidic residues" evidence="4">
    <location>
        <begin position="566"/>
        <end position="586"/>
    </location>
</feature>
<feature type="compositionally biased region" description="Pro residues" evidence="4">
    <location>
        <begin position="610"/>
        <end position="620"/>
    </location>
</feature>
<feature type="compositionally biased region" description="Basic and acidic residues" evidence="4">
    <location>
        <begin position="641"/>
        <end position="660"/>
    </location>
</feature>
<feature type="modified residue" description="Phosphotyrosine" evidence="7">
    <location>
        <position position="649"/>
    </location>
</feature>
<feature type="sequence conflict" description="In Ref. 2; BAC30875." evidence="6" ref="2">
    <original>H</original>
    <variation>R</variation>
    <location>
        <position position="63"/>
    </location>
</feature>
<feature type="sequence conflict" description="In Ref. 1; AAO13613 and 2; BAE33622." evidence="6" ref="1 2">
    <original>F</original>
    <variation>L</variation>
    <location>
        <position position="75"/>
    </location>
</feature>
<feature type="sequence conflict" description="In Ref. 1; AAO13613 and 2; BAE33622." evidence="6" ref="1 2">
    <original>A</original>
    <variation>M</variation>
    <location>
        <position position="375"/>
    </location>
</feature>
<feature type="sequence conflict" description="In Ref. 2; BAC30875." evidence="6" ref="2">
    <original>E</original>
    <variation>V</variation>
    <location>
        <position position="386"/>
    </location>
</feature>
<feature type="sequence conflict" description="In Ref. 1; AAO13613." evidence="6" ref="1">
    <original>S</original>
    <variation>P</variation>
    <location>
        <position position="431"/>
    </location>
</feature>
<feature type="sequence conflict" description="In Ref. 2; BAC30875." evidence="6" ref="2">
    <original>L</original>
    <variation>V</variation>
    <location>
        <position position="522"/>
    </location>
</feature>
<reference key="1">
    <citation type="submission" date="2002-11" db="EMBL/GenBank/DDBJ databases">
        <title>AVIEF sequence.</title>
        <authorList>
            <person name="Vu H.L."/>
            <person name="Nguyen H.H."/>
            <person name="Mestecky J."/>
        </authorList>
    </citation>
    <scope>NUCLEOTIDE SEQUENCE [MRNA]</scope>
    <source>
        <strain>BALB/cJ</strain>
        <tissue>Lymph node</tissue>
    </source>
</reference>
<reference key="2">
    <citation type="journal article" date="2005" name="Science">
        <title>The transcriptional landscape of the mammalian genome.</title>
        <authorList>
            <person name="Carninci P."/>
            <person name="Kasukawa T."/>
            <person name="Katayama S."/>
            <person name="Gough J."/>
            <person name="Frith M.C."/>
            <person name="Maeda N."/>
            <person name="Oyama R."/>
            <person name="Ravasi T."/>
            <person name="Lenhard B."/>
            <person name="Wells C."/>
            <person name="Kodzius R."/>
            <person name="Shimokawa K."/>
            <person name="Bajic V.B."/>
            <person name="Brenner S.E."/>
            <person name="Batalov S."/>
            <person name="Forrest A.R."/>
            <person name="Zavolan M."/>
            <person name="Davis M.J."/>
            <person name="Wilming L.G."/>
            <person name="Aidinis V."/>
            <person name="Allen J.E."/>
            <person name="Ambesi-Impiombato A."/>
            <person name="Apweiler R."/>
            <person name="Aturaliya R.N."/>
            <person name="Bailey T.L."/>
            <person name="Bansal M."/>
            <person name="Baxter L."/>
            <person name="Beisel K.W."/>
            <person name="Bersano T."/>
            <person name="Bono H."/>
            <person name="Chalk A.M."/>
            <person name="Chiu K.P."/>
            <person name="Choudhary V."/>
            <person name="Christoffels A."/>
            <person name="Clutterbuck D.R."/>
            <person name="Crowe M.L."/>
            <person name="Dalla E."/>
            <person name="Dalrymple B.P."/>
            <person name="de Bono B."/>
            <person name="Della Gatta G."/>
            <person name="di Bernardo D."/>
            <person name="Down T."/>
            <person name="Engstrom P."/>
            <person name="Fagiolini M."/>
            <person name="Faulkner G."/>
            <person name="Fletcher C.F."/>
            <person name="Fukushima T."/>
            <person name="Furuno M."/>
            <person name="Futaki S."/>
            <person name="Gariboldi M."/>
            <person name="Georgii-Hemming P."/>
            <person name="Gingeras T.R."/>
            <person name="Gojobori T."/>
            <person name="Green R.E."/>
            <person name="Gustincich S."/>
            <person name="Harbers M."/>
            <person name="Hayashi Y."/>
            <person name="Hensch T.K."/>
            <person name="Hirokawa N."/>
            <person name="Hill D."/>
            <person name="Huminiecki L."/>
            <person name="Iacono M."/>
            <person name="Ikeo K."/>
            <person name="Iwama A."/>
            <person name="Ishikawa T."/>
            <person name="Jakt M."/>
            <person name="Kanapin A."/>
            <person name="Katoh M."/>
            <person name="Kawasawa Y."/>
            <person name="Kelso J."/>
            <person name="Kitamura H."/>
            <person name="Kitano H."/>
            <person name="Kollias G."/>
            <person name="Krishnan S.P."/>
            <person name="Kruger A."/>
            <person name="Kummerfeld S.K."/>
            <person name="Kurochkin I.V."/>
            <person name="Lareau L.F."/>
            <person name="Lazarevic D."/>
            <person name="Lipovich L."/>
            <person name="Liu J."/>
            <person name="Liuni S."/>
            <person name="McWilliam S."/>
            <person name="Madan Babu M."/>
            <person name="Madera M."/>
            <person name="Marchionni L."/>
            <person name="Matsuda H."/>
            <person name="Matsuzawa S."/>
            <person name="Miki H."/>
            <person name="Mignone F."/>
            <person name="Miyake S."/>
            <person name="Morris K."/>
            <person name="Mottagui-Tabar S."/>
            <person name="Mulder N."/>
            <person name="Nakano N."/>
            <person name="Nakauchi H."/>
            <person name="Ng P."/>
            <person name="Nilsson R."/>
            <person name="Nishiguchi S."/>
            <person name="Nishikawa S."/>
            <person name="Nori F."/>
            <person name="Ohara O."/>
            <person name="Okazaki Y."/>
            <person name="Orlando V."/>
            <person name="Pang K.C."/>
            <person name="Pavan W.J."/>
            <person name="Pavesi G."/>
            <person name="Pesole G."/>
            <person name="Petrovsky N."/>
            <person name="Piazza S."/>
            <person name="Reed J."/>
            <person name="Reid J.F."/>
            <person name="Ring B.Z."/>
            <person name="Ringwald M."/>
            <person name="Rost B."/>
            <person name="Ruan Y."/>
            <person name="Salzberg S.L."/>
            <person name="Sandelin A."/>
            <person name="Schneider C."/>
            <person name="Schoenbach C."/>
            <person name="Sekiguchi K."/>
            <person name="Semple C.A."/>
            <person name="Seno S."/>
            <person name="Sessa L."/>
            <person name="Sheng Y."/>
            <person name="Shibata Y."/>
            <person name="Shimada H."/>
            <person name="Shimada K."/>
            <person name="Silva D."/>
            <person name="Sinclair B."/>
            <person name="Sperling S."/>
            <person name="Stupka E."/>
            <person name="Sugiura K."/>
            <person name="Sultana R."/>
            <person name="Takenaka Y."/>
            <person name="Taki K."/>
            <person name="Tammoja K."/>
            <person name="Tan S.L."/>
            <person name="Tang S."/>
            <person name="Taylor M.S."/>
            <person name="Tegner J."/>
            <person name="Teichmann S.A."/>
            <person name="Ueda H.R."/>
            <person name="van Nimwegen E."/>
            <person name="Verardo R."/>
            <person name="Wei C.L."/>
            <person name="Yagi K."/>
            <person name="Yamanishi H."/>
            <person name="Zabarovsky E."/>
            <person name="Zhu S."/>
            <person name="Zimmer A."/>
            <person name="Hide W."/>
            <person name="Bult C."/>
            <person name="Grimmond S.M."/>
            <person name="Teasdale R.D."/>
            <person name="Liu E.T."/>
            <person name="Brusic V."/>
            <person name="Quackenbush J."/>
            <person name="Wahlestedt C."/>
            <person name="Mattick J.S."/>
            <person name="Hume D.A."/>
            <person name="Kai C."/>
            <person name="Sasaki D."/>
            <person name="Tomaru Y."/>
            <person name="Fukuda S."/>
            <person name="Kanamori-Katayama M."/>
            <person name="Suzuki M."/>
            <person name="Aoki J."/>
            <person name="Arakawa T."/>
            <person name="Iida J."/>
            <person name="Imamura K."/>
            <person name="Itoh M."/>
            <person name="Kato T."/>
            <person name="Kawaji H."/>
            <person name="Kawagashira N."/>
            <person name="Kawashima T."/>
            <person name="Kojima M."/>
            <person name="Kondo S."/>
            <person name="Konno H."/>
            <person name="Nakano K."/>
            <person name="Ninomiya N."/>
            <person name="Nishio T."/>
            <person name="Okada M."/>
            <person name="Plessy C."/>
            <person name="Shibata K."/>
            <person name="Shiraki T."/>
            <person name="Suzuki S."/>
            <person name="Tagami M."/>
            <person name="Waki K."/>
            <person name="Watahiki A."/>
            <person name="Okamura-Oho Y."/>
            <person name="Suzuki H."/>
            <person name="Kawai J."/>
            <person name="Hayashizaki Y."/>
        </authorList>
    </citation>
    <scope>NUCLEOTIDE SEQUENCE [LARGE SCALE MRNA]</scope>
    <source>
        <strain>C57BL/6J</strain>
        <strain>NOD</strain>
        <tissue>Aorta</tissue>
        <tissue>Spleen</tissue>
        <tissue>Vein</tissue>
    </source>
</reference>
<reference key="3">
    <citation type="journal article" date="2009" name="PLoS Biol.">
        <title>Lineage-specific biology revealed by a finished genome assembly of the mouse.</title>
        <authorList>
            <person name="Church D.M."/>
            <person name="Goodstadt L."/>
            <person name="Hillier L.W."/>
            <person name="Zody M.C."/>
            <person name="Goldstein S."/>
            <person name="She X."/>
            <person name="Bult C.J."/>
            <person name="Agarwala R."/>
            <person name="Cherry J.L."/>
            <person name="DiCuccio M."/>
            <person name="Hlavina W."/>
            <person name="Kapustin Y."/>
            <person name="Meric P."/>
            <person name="Maglott D."/>
            <person name="Birtle Z."/>
            <person name="Marques A.C."/>
            <person name="Graves T."/>
            <person name="Zhou S."/>
            <person name="Teague B."/>
            <person name="Potamousis K."/>
            <person name="Churas C."/>
            <person name="Place M."/>
            <person name="Herschleb J."/>
            <person name="Runnheim R."/>
            <person name="Forrest D."/>
            <person name="Amos-Landgraf J."/>
            <person name="Schwartz D.C."/>
            <person name="Cheng Z."/>
            <person name="Lindblad-Toh K."/>
            <person name="Eichler E.E."/>
            <person name="Ponting C.P."/>
        </authorList>
    </citation>
    <scope>NUCLEOTIDE SEQUENCE [LARGE SCALE GENOMIC DNA]</scope>
    <source>
        <strain>C57BL/6J</strain>
    </source>
</reference>
<reference key="4">
    <citation type="journal article" date="2002" name="EMBO J.">
        <title>BANK regulates BCR-induced calcium mobilization by promoting tyrosine phosphorylation of IP3 receptor.</title>
        <authorList>
            <person name="Yokoyama K."/>
            <person name="Su I."/>
            <person name="Tezuka T."/>
            <person name="Yasuda T."/>
            <person name="Mikoshiba K."/>
            <person name="Tarakhovsky A."/>
            <person name="Yamamoto T."/>
        </authorList>
    </citation>
    <scope>TISSUE SPECIFICITY</scope>
</reference>
<reference key="5">
    <citation type="journal article" date="2010" name="Cell">
        <title>A tissue-specific atlas of mouse protein phosphorylation and expression.</title>
        <authorList>
            <person name="Huttlin E.L."/>
            <person name="Jedrychowski M.P."/>
            <person name="Elias J.E."/>
            <person name="Goswami T."/>
            <person name="Rad R."/>
            <person name="Beausoleil S.A."/>
            <person name="Villen J."/>
            <person name="Haas W."/>
            <person name="Sowa M.E."/>
            <person name="Gygi S.P."/>
        </authorList>
    </citation>
    <scope>PHOSPHORYLATION [LARGE SCALE ANALYSIS] AT TYR-649</scope>
    <scope>IDENTIFICATION BY MASS SPECTROMETRY [LARGE SCALE ANALYSIS]</scope>
    <source>
        <tissue>Spleen</tissue>
    </source>
</reference>
<gene>
    <name type="primary">Bank1</name>
</gene>